<keyword id="KW-0004">4Fe-4S</keyword>
<keyword id="KW-0013">ADP-ribosylation</keyword>
<keyword id="KW-0067">ATP-binding</keyword>
<keyword id="KW-0408">Iron</keyword>
<keyword id="KW-0411">Iron-sulfur</keyword>
<keyword id="KW-0479">Metal-binding</keyword>
<keyword id="KW-0535">Nitrogen fixation</keyword>
<keyword id="KW-0547">Nucleotide-binding</keyword>
<keyword id="KW-0560">Oxidoreductase</keyword>
<gene>
    <name type="primary">nifH</name>
</gene>
<dbReference type="EC" id="1.18.6.1"/>
<dbReference type="EMBL" id="K00487">
    <property type="protein sequence ID" value="AAA33884.1"/>
    <property type="molecule type" value="Genomic_DNA"/>
</dbReference>
<dbReference type="SMR" id="P00463"/>
<dbReference type="GO" id="GO:0051539">
    <property type="term" value="F:4 iron, 4 sulfur cluster binding"/>
    <property type="evidence" value="ECO:0007669"/>
    <property type="project" value="UniProtKB-KW"/>
</dbReference>
<dbReference type="GO" id="GO:0005524">
    <property type="term" value="F:ATP binding"/>
    <property type="evidence" value="ECO:0007669"/>
    <property type="project" value="UniProtKB-UniRule"/>
</dbReference>
<dbReference type="GO" id="GO:0046872">
    <property type="term" value="F:metal ion binding"/>
    <property type="evidence" value="ECO:0007669"/>
    <property type="project" value="UniProtKB-KW"/>
</dbReference>
<dbReference type="GO" id="GO:0016163">
    <property type="term" value="F:nitrogenase activity"/>
    <property type="evidence" value="ECO:0007669"/>
    <property type="project" value="UniProtKB-UniRule"/>
</dbReference>
<dbReference type="GO" id="GO:0009399">
    <property type="term" value="P:nitrogen fixation"/>
    <property type="evidence" value="ECO:0007669"/>
    <property type="project" value="UniProtKB-UniRule"/>
</dbReference>
<dbReference type="CDD" id="cd02040">
    <property type="entry name" value="NifH"/>
    <property type="match status" value="1"/>
</dbReference>
<dbReference type="FunFam" id="3.40.50.300:FF:001379">
    <property type="entry name" value="Nitrogenase iron protein 1"/>
    <property type="match status" value="1"/>
</dbReference>
<dbReference type="Gene3D" id="3.40.50.300">
    <property type="entry name" value="P-loop containing nucleotide triphosphate hydrolases"/>
    <property type="match status" value="1"/>
</dbReference>
<dbReference type="HAMAP" id="MF_00533">
    <property type="entry name" value="NifH"/>
    <property type="match status" value="1"/>
</dbReference>
<dbReference type="InterPro" id="IPR030655">
    <property type="entry name" value="NifH/chlL_CS"/>
</dbReference>
<dbReference type="InterPro" id="IPR000392">
    <property type="entry name" value="NifH/frxC"/>
</dbReference>
<dbReference type="InterPro" id="IPR005977">
    <property type="entry name" value="Nitrogenase_Fe_NifH"/>
</dbReference>
<dbReference type="InterPro" id="IPR027417">
    <property type="entry name" value="P-loop_NTPase"/>
</dbReference>
<dbReference type="NCBIfam" id="TIGR01287">
    <property type="entry name" value="nifH"/>
    <property type="match status" value="1"/>
</dbReference>
<dbReference type="PANTHER" id="PTHR42864">
    <property type="entry name" value="LIGHT-INDEPENDENT PROTOCHLOROPHYLLIDE REDUCTASE IRON-SULFUR ATP-BINDING PROTEIN"/>
    <property type="match status" value="1"/>
</dbReference>
<dbReference type="PANTHER" id="PTHR42864:SF2">
    <property type="entry name" value="LIGHT-INDEPENDENT PROTOCHLOROPHYLLIDE REDUCTASE IRON-SULFUR ATP-BINDING PROTEIN"/>
    <property type="match status" value="1"/>
</dbReference>
<dbReference type="Pfam" id="PF00142">
    <property type="entry name" value="Fer4_NifH"/>
    <property type="match status" value="1"/>
</dbReference>
<dbReference type="PIRSF" id="PIRSF000363">
    <property type="entry name" value="Nitrogenase_iron"/>
    <property type="match status" value="1"/>
</dbReference>
<dbReference type="PRINTS" id="PR00091">
    <property type="entry name" value="NITROGNASEII"/>
</dbReference>
<dbReference type="SUPFAM" id="SSF52540">
    <property type="entry name" value="P-loop containing nucleoside triphosphate hydrolases"/>
    <property type="match status" value="1"/>
</dbReference>
<dbReference type="PROSITE" id="PS00746">
    <property type="entry name" value="NIFH_FRXC_1"/>
    <property type="match status" value="1"/>
</dbReference>
<dbReference type="PROSITE" id="PS00692">
    <property type="entry name" value="NIFH_FRXC_2"/>
    <property type="match status" value="1"/>
</dbReference>
<dbReference type="PROSITE" id="PS51026">
    <property type="entry name" value="NIFH_FRXC_3"/>
    <property type="match status" value="1"/>
</dbReference>
<name>NIFH_BRASP</name>
<proteinExistence type="inferred from homology"/>
<organism>
    <name type="scientific">Bradyrhizobium sp. (strain ANU 289)</name>
    <dbReference type="NCBI Taxonomy" id="186901"/>
    <lineage>
        <taxon>Bacteria</taxon>
        <taxon>Pseudomonadati</taxon>
        <taxon>Pseudomonadota</taxon>
        <taxon>Alphaproteobacteria</taxon>
        <taxon>Hyphomicrobiales</taxon>
        <taxon>Nitrobacteraceae</taxon>
        <taxon>Bradyrhizobium</taxon>
    </lineage>
</organism>
<comment type="function">
    <text evidence="1">The key enzymatic reactions in nitrogen fixation are catalyzed by the nitrogenase complex, which has 2 components: the iron protein and the molybdenum-iron protein.</text>
</comment>
<comment type="catalytic activity">
    <reaction>
        <text>N2 + 8 reduced [2Fe-2S]-[ferredoxin] + 16 ATP + 16 H2O = H2 + 8 oxidized [2Fe-2S]-[ferredoxin] + 2 NH4(+) + 16 ADP + 16 phosphate + 6 H(+)</text>
        <dbReference type="Rhea" id="RHEA:21448"/>
        <dbReference type="Rhea" id="RHEA-COMP:10000"/>
        <dbReference type="Rhea" id="RHEA-COMP:10001"/>
        <dbReference type="ChEBI" id="CHEBI:15377"/>
        <dbReference type="ChEBI" id="CHEBI:15378"/>
        <dbReference type="ChEBI" id="CHEBI:17997"/>
        <dbReference type="ChEBI" id="CHEBI:18276"/>
        <dbReference type="ChEBI" id="CHEBI:28938"/>
        <dbReference type="ChEBI" id="CHEBI:30616"/>
        <dbReference type="ChEBI" id="CHEBI:33737"/>
        <dbReference type="ChEBI" id="CHEBI:33738"/>
        <dbReference type="ChEBI" id="CHEBI:43474"/>
        <dbReference type="ChEBI" id="CHEBI:456216"/>
        <dbReference type="EC" id="1.18.6.1"/>
    </reaction>
</comment>
<comment type="cofactor">
    <cofactor evidence="1">
        <name>[4Fe-4S] cluster</name>
        <dbReference type="ChEBI" id="CHEBI:49883"/>
    </cofactor>
    <text evidence="1">Binds 1 [4Fe-4S] cluster per dimer.</text>
</comment>
<comment type="subunit">
    <text evidence="1">Homodimer.</text>
</comment>
<comment type="PTM">
    <text evidence="1">The reversible ADP-ribosylation of Arg-102 inactivates the nitrogenase reductase and regulates nitrogenase activity.</text>
</comment>
<comment type="similarity">
    <text evidence="3">Belongs to the NifH/BchL/ChlL family.</text>
</comment>
<reference key="1">
    <citation type="journal article" date="1983" name="DNA">
        <title>Nitrogenase structural genes are unlinked in the nonlegume symbiont Parasponia rhizobium.</title>
        <authorList>
            <person name="Scott K.F."/>
            <person name="Rolfe B.G."/>
            <person name="Shine J."/>
        </authorList>
    </citation>
    <scope>NUCLEOTIDE SEQUENCE [GENOMIC DNA]</scope>
</reference>
<accession>P00463</accession>
<protein>
    <recommendedName>
        <fullName>Nitrogenase iron protein</fullName>
        <ecNumber>1.18.6.1</ecNumber>
    </recommendedName>
    <alternativeName>
        <fullName>Nitrogenase Fe protein</fullName>
    </alternativeName>
    <alternativeName>
        <fullName>Nitrogenase component II</fullName>
    </alternativeName>
    <alternativeName>
        <fullName>Nitrogenase reductase</fullName>
    </alternativeName>
</protein>
<sequence>MSSLRQIAFYGKGGIGKSTTSQNTLAALAEMGQKILIVGCDPKADSTRLILHAKAQDTILSLAASAGSVEDLELEDVMKVGYKDIRCVESGGPEPGVGCAGRGVITSINFLEENGAYENIDYVSYDVLGDVVCGGFAMPIRENKAQEIYIVMSGEMMAMYAANNISKGILKYANSGGVRLGGLICNERQTDKELELAEALAKKLGTQLIYFVPRDNVVQHAELRRMTVLEYAPESQQADHYRNLATKVHNNGGKGIIPTPISMDELEDMLMEHGIMKPVDESIVGKTAAELAAS</sequence>
<evidence type="ECO:0000250" key="1"/>
<evidence type="ECO:0000255" key="2"/>
<evidence type="ECO:0000305" key="3"/>
<feature type="chain" id="PRO_0000139494" description="Nitrogenase iron protein">
    <location>
        <begin position="1"/>
        <end position="294"/>
    </location>
</feature>
<feature type="binding site" evidence="2">
    <location>
        <begin position="11"/>
        <end position="18"/>
    </location>
    <ligand>
        <name>ATP</name>
        <dbReference type="ChEBI" id="CHEBI:30616"/>
    </ligand>
</feature>
<feature type="binding site" evidence="1">
    <location>
        <position position="99"/>
    </location>
    <ligand>
        <name>[4Fe-4S] cluster</name>
        <dbReference type="ChEBI" id="CHEBI:49883"/>
        <note>ligand shared between dimeric partners</note>
    </ligand>
</feature>
<feature type="binding site" evidence="1">
    <location>
        <position position="133"/>
    </location>
    <ligand>
        <name>[4Fe-4S] cluster</name>
        <dbReference type="ChEBI" id="CHEBI:49883"/>
        <note>ligand shared between dimeric partners</note>
    </ligand>
</feature>
<feature type="modified residue" description="ADP-ribosylarginine; by dinitrogenase reductase ADP-ribosyltransferase" evidence="1">
    <location>
        <position position="102"/>
    </location>
</feature>